<protein>
    <recommendedName>
        <fullName>Mitochondrial zinc maintenance protein 1, mitochondrial</fullName>
    </recommendedName>
</protein>
<name>MZM1_EREGS</name>
<keyword id="KW-0143">Chaperone</keyword>
<keyword id="KW-0496">Mitochondrion</keyword>
<keyword id="KW-1185">Reference proteome</keyword>
<keyword id="KW-0809">Transit peptide</keyword>
<reference key="1">
    <citation type="journal article" date="2004" name="Science">
        <title>The Ashbya gossypii genome as a tool for mapping the ancient Saccharomyces cerevisiae genome.</title>
        <authorList>
            <person name="Dietrich F.S."/>
            <person name="Voegeli S."/>
            <person name="Brachat S."/>
            <person name="Lerch A."/>
            <person name="Gates K."/>
            <person name="Steiner S."/>
            <person name="Mohr C."/>
            <person name="Poehlmann R."/>
            <person name="Luedi P."/>
            <person name="Choi S."/>
            <person name="Wing R.A."/>
            <person name="Flavier A."/>
            <person name="Gaffney T.D."/>
            <person name="Philippsen P."/>
        </authorList>
    </citation>
    <scope>NUCLEOTIDE SEQUENCE [LARGE SCALE GENOMIC DNA]</scope>
    <source>
        <strain>ATCC 10895 / CBS 109.51 / FGSC 9923 / NRRL Y-1056</strain>
    </source>
</reference>
<reference key="2">
    <citation type="journal article" date="2013" name="G3 (Bethesda)">
        <title>Genomes of Ashbya fungi isolated from insects reveal four mating-type loci, numerous translocations, lack of transposons, and distinct gene duplications.</title>
        <authorList>
            <person name="Dietrich F.S."/>
            <person name="Voegeli S."/>
            <person name="Kuo S."/>
            <person name="Philippsen P."/>
        </authorList>
    </citation>
    <scope>GENOME REANNOTATION</scope>
    <source>
        <strain>ATCC 10895 / CBS 109.51 / FGSC 9923 / NRRL Y-1056</strain>
    </source>
</reference>
<gene>
    <name type="primary">MZM1</name>
    <name type="ordered locus">AFR338W</name>
    <name type="ORF">AGOS_AFR338W</name>
</gene>
<organism>
    <name type="scientific">Eremothecium gossypii (strain ATCC 10895 / CBS 109.51 / FGSC 9923 / NRRL Y-1056)</name>
    <name type="common">Yeast</name>
    <name type="synonym">Ashbya gossypii</name>
    <dbReference type="NCBI Taxonomy" id="284811"/>
    <lineage>
        <taxon>Eukaryota</taxon>
        <taxon>Fungi</taxon>
        <taxon>Dikarya</taxon>
        <taxon>Ascomycota</taxon>
        <taxon>Saccharomycotina</taxon>
        <taxon>Saccharomycetes</taxon>
        <taxon>Saccharomycetales</taxon>
        <taxon>Saccharomycetaceae</taxon>
        <taxon>Eremothecium</taxon>
    </lineage>
</organism>
<feature type="transit peptide" description="Mitochondrion" evidence="2">
    <location>
        <begin position="1"/>
        <end position="15"/>
    </location>
</feature>
<feature type="chain" id="PRO_0000405479" description="Mitochondrial zinc maintenance protein 1, mitochondrial">
    <location>
        <begin position="16"/>
        <end position="119"/>
    </location>
</feature>
<sequence>MSTSSRALAAYRNALRATKVAFGEDVRMLVAARKAMRHGMLAPDASLPVEDQITHMNDIATFLRRNLVQGKKVSGKDDVYQLRIHEETELGDNATIKETKTTLASQGGGCCGGGKDLYK</sequence>
<comment type="function">
    <text evidence="1">Assembly factor required for Rieske Fe-S protein RIP1 incorporation into the cytochrome b-c1 (CIII) complex. Functions as a chaperone, binding to this subunit within the mitochondrial matrix and stabilizing it prior to its translocation and insertion into the late CIII dimeric intermediate within the mitochondrial inner membrane. Modulates the mitochondrial matrix zinc pool (By similarity).</text>
</comment>
<comment type="subunit">
    <text evidence="1">Interacts with RIP1.</text>
</comment>
<comment type="subcellular location">
    <subcellularLocation>
        <location evidence="1">Mitochondrion matrix</location>
    </subcellularLocation>
</comment>
<comment type="similarity">
    <text evidence="3">Belongs to the complex I LYR family. MZM1 subfamily.</text>
</comment>
<accession>Q753H4</accession>
<proteinExistence type="inferred from homology"/>
<evidence type="ECO:0000250" key="1"/>
<evidence type="ECO:0000255" key="2"/>
<evidence type="ECO:0000305" key="3"/>
<dbReference type="EMBL" id="AE016819">
    <property type="protein sequence ID" value="AAS53709.1"/>
    <property type="molecule type" value="Genomic_DNA"/>
</dbReference>
<dbReference type="RefSeq" id="NP_985885.1">
    <property type="nucleotide sequence ID" value="NM_211240.1"/>
</dbReference>
<dbReference type="SMR" id="Q753H4"/>
<dbReference type="FunCoup" id="Q753H4">
    <property type="interactions" value="26"/>
</dbReference>
<dbReference type="STRING" id="284811.Q753H4"/>
<dbReference type="EnsemblFungi" id="AAS53709">
    <property type="protein sequence ID" value="AAS53709"/>
    <property type="gene ID" value="AGOS_AFR338W"/>
</dbReference>
<dbReference type="GeneID" id="4622152"/>
<dbReference type="KEGG" id="ago:AGOS_AFR338W"/>
<dbReference type="eggNOG" id="ENOG502S6EF">
    <property type="taxonomic scope" value="Eukaryota"/>
</dbReference>
<dbReference type="HOGENOM" id="CLU_147114_2_2_1"/>
<dbReference type="InParanoid" id="Q753H4"/>
<dbReference type="OMA" id="KYKLRIH"/>
<dbReference type="OrthoDB" id="529194at2759"/>
<dbReference type="Proteomes" id="UP000000591">
    <property type="component" value="Chromosome VI"/>
</dbReference>
<dbReference type="GO" id="GO:0005759">
    <property type="term" value="C:mitochondrial matrix"/>
    <property type="evidence" value="ECO:0000318"/>
    <property type="project" value="GO_Central"/>
</dbReference>
<dbReference type="GO" id="GO:0044183">
    <property type="term" value="F:protein folding chaperone"/>
    <property type="evidence" value="ECO:0000318"/>
    <property type="project" value="GO_Central"/>
</dbReference>
<dbReference type="GO" id="GO:0034551">
    <property type="term" value="P:mitochondrial respiratory chain complex III assembly"/>
    <property type="evidence" value="ECO:0000318"/>
    <property type="project" value="GO_Central"/>
</dbReference>
<dbReference type="CDD" id="cd20267">
    <property type="entry name" value="Complex1_LYR_LYRM7"/>
    <property type="match status" value="1"/>
</dbReference>
<dbReference type="InterPro" id="IPR045298">
    <property type="entry name" value="Complex1_LYR_LYRM7"/>
</dbReference>
<dbReference type="InterPro" id="IPR050435">
    <property type="entry name" value="MZM1/LYRM7"/>
</dbReference>
<dbReference type="PANTHER" id="PTHR46749">
    <property type="entry name" value="COMPLEX III ASSEMBLY FACTOR LYRM7"/>
    <property type="match status" value="1"/>
</dbReference>
<dbReference type="PANTHER" id="PTHR46749:SF1">
    <property type="entry name" value="COMPLEX III ASSEMBLY FACTOR LYRM7"/>
    <property type="match status" value="1"/>
</dbReference>